<reference key="1">
    <citation type="journal article" date="2004" name="Proc. Natl. Acad. Sci. U.S.A.">
        <title>Insights into the evolution of Yersinia pestis through whole-genome comparison with Yersinia pseudotuberculosis.</title>
        <authorList>
            <person name="Chain P.S.G."/>
            <person name="Carniel E."/>
            <person name="Larimer F.W."/>
            <person name="Lamerdin J."/>
            <person name="Stoutland P.O."/>
            <person name="Regala W.M."/>
            <person name="Georgescu A.M."/>
            <person name="Vergez L.M."/>
            <person name="Land M.L."/>
            <person name="Motin V.L."/>
            <person name="Brubaker R.R."/>
            <person name="Fowler J."/>
            <person name="Hinnebusch J."/>
            <person name="Marceau M."/>
            <person name="Medigue C."/>
            <person name="Simonet M."/>
            <person name="Chenal-Francisque V."/>
            <person name="Souza B."/>
            <person name="Dacheux D."/>
            <person name="Elliott J.M."/>
            <person name="Derbise A."/>
            <person name="Hauser L.J."/>
            <person name="Garcia E."/>
        </authorList>
    </citation>
    <scope>NUCLEOTIDE SEQUENCE [LARGE SCALE GENOMIC DNA]</scope>
    <source>
        <strain>IP32953</strain>
    </source>
</reference>
<proteinExistence type="inferred from homology"/>
<sequence length="523" mass="56873">MSAPHSALQAELDAAQSPYLAFRGIGKSFPGVLALDDISFTCQAGQIHALMGENGAGKSTLLKILSGNYTPTQGEIHIKGKAVNFTNTTDALDAGVAIIYQELHLVPEMTVAENIYLGQLPTKMGMVDRKLLRYESRIQLSHLGLDIDPDTPLKYLSIGQWQMVEIAKALARNAKIIAFDEPTSSLSAREIEQLFRVIRELRAEGRVILYVSHRMEEIFALSDAITVFKDGRYVRTFDDMTQVNNASLVQAMVGRNLGDIYGYQPREIGSERLTLQAVKAIGVASPISLTVHQGEIVGLFGLVGAGRSELLKGLFGDTKLTSGKLLLDGQPLTIRSPIDAISAGIMLCPEDRKADGIIPVHSVQDNINISARRKTLTAGCLINNRWEADNALLRIQSLNIKTPGPQQLIMNLSGGNQQKAILGRWLSEDMKVILLDEPTRGIDVGAKHEIYNVIYQLAKQGIAVLFASSDLPEVLGLADRIVVMREGAISGELDHEYATEEQALSLAMLRTPNIATNTASAVA</sequence>
<gene>
    <name evidence="1" type="primary">araG</name>
    <name type="ordered locus">YPTB2175</name>
</gene>
<dbReference type="EC" id="7.5.2.12" evidence="1"/>
<dbReference type="EMBL" id="BX936398">
    <property type="protein sequence ID" value="CAH21413.1"/>
    <property type="status" value="ALT_INIT"/>
    <property type="molecule type" value="Genomic_DNA"/>
</dbReference>
<dbReference type="RefSeq" id="WP_002210588.1">
    <property type="nucleotide sequence ID" value="NZ_CP009712.1"/>
</dbReference>
<dbReference type="SMR" id="Q66AF5"/>
<dbReference type="GeneID" id="57976414"/>
<dbReference type="KEGG" id="ypo:BZ17_287"/>
<dbReference type="KEGG" id="yps:YPTB2175"/>
<dbReference type="PATRIC" id="fig|273123.14.peg.304"/>
<dbReference type="Proteomes" id="UP000001011">
    <property type="component" value="Chromosome"/>
</dbReference>
<dbReference type="GO" id="GO:0005886">
    <property type="term" value="C:plasma membrane"/>
    <property type="evidence" value="ECO:0007669"/>
    <property type="project" value="UniProtKB-SubCell"/>
</dbReference>
<dbReference type="GO" id="GO:0015612">
    <property type="term" value="F:ABC-type L-arabinose transporter activity"/>
    <property type="evidence" value="ECO:0007669"/>
    <property type="project" value="UniProtKB-EC"/>
</dbReference>
<dbReference type="GO" id="GO:0005524">
    <property type="term" value="F:ATP binding"/>
    <property type="evidence" value="ECO:0007669"/>
    <property type="project" value="UniProtKB-KW"/>
</dbReference>
<dbReference type="GO" id="GO:0016887">
    <property type="term" value="F:ATP hydrolysis activity"/>
    <property type="evidence" value="ECO:0007669"/>
    <property type="project" value="InterPro"/>
</dbReference>
<dbReference type="CDD" id="cd03216">
    <property type="entry name" value="ABC_Carb_Monos_I"/>
    <property type="match status" value="1"/>
</dbReference>
<dbReference type="CDD" id="cd03215">
    <property type="entry name" value="ABC_Carb_Monos_II"/>
    <property type="match status" value="1"/>
</dbReference>
<dbReference type="FunFam" id="3.40.50.300:FF:000126">
    <property type="entry name" value="Galactose/methyl galactoside import ATP-binding protein MglA"/>
    <property type="match status" value="1"/>
</dbReference>
<dbReference type="FunFam" id="3.40.50.300:FF:000127">
    <property type="entry name" value="Ribose import ATP-binding protein RbsA"/>
    <property type="match status" value="1"/>
</dbReference>
<dbReference type="Gene3D" id="3.40.50.300">
    <property type="entry name" value="P-loop containing nucleotide triphosphate hydrolases"/>
    <property type="match status" value="2"/>
</dbReference>
<dbReference type="InterPro" id="IPR003593">
    <property type="entry name" value="AAA+_ATPase"/>
</dbReference>
<dbReference type="InterPro" id="IPR050107">
    <property type="entry name" value="ABC_carbohydrate_import_ATPase"/>
</dbReference>
<dbReference type="InterPro" id="IPR003439">
    <property type="entry name" value="ABC_transporter-like_ATP-bd"/>
</dbReference>
<dbReference type="InterPro" id="IPR017871">
    <property type="entry name" value="ABC_transporter-like_CS"/>
</dbReference>
<dbReference type="InterPro" id="IPR027417">
    <property type="entry name" value="P-loop_NTPase"/>
</dbReference>
<dbReference type="NCBIfam" id="NF008442">
    <property type="entry name" value="PRK11288.1"/>
    <property type="match status" value="1"/>
</dbReference>
<dbReference type="PANTHER" id="PTHR43790:SF6">
    <property type="entry name" value="ARABINOSE IMPORT ATP-BINDING PROTEIN ARAG"/>
    <property type="match status" value="1"/>
</dbReference>
<dbReference type="PANTHER" id="PTHR43790">
    <property type="entry name" value="CARBOHYDRATE TRANSPORT ATP-BINDING PROTEIN MG119-RELATED"/>
    <property type="match status" value="1"/>
</dbReference>
<dbReference type="Pfam" id="PF00005">
    <property type="entry name" value="ABC_tran"/>
    <property type="match status" value="2"/>
</dbReference>
<dbReference type="SMART" id="SM00382">
    <property type="entry name" value="AAA"/>
    <property type="match status" value="2"/>
</dbReference>
<dbReference type="SUPFAM" id="SSF52540">
    <property type="entry name" value="P-loop containing nucleoside triphosphate hydrolases"/>
    <property type="match status" value="2"/>
</dbReference>
<dbReference type="PROSITE" id="PS00211">
    <property type="entry name" value="ABC_TRANSPORTER_1"/>
    <property type="match status" value="1"/>
</dbReference>
<dbReference type="PROSITE" id="PS50893">
    <property type="entry name" value="ABC_TRANSPORTER_2"/>
    <property type="match status" value="2"/>
</dbReference>
<dbReference type="PROSITE" id="PS51268">
    <property type="entry name" value="ARAG"/>
    <property type="match status" value="1"/>
</dbReference>
<keyword id="KW-0067">ATP-binding</keyword>
<keyword id="KW-0997">Cell inner membrane</keyword>
<keyword id="KW-1003">Cell membrane</keyword>
<keyword id="KW-0472">Membrane</keyword>
<keyword id="KW-0547">Nucleotide-binding</keyword>
<keyword id="KW-0677">Repeat</keyword>
<keyword id="KW-0762">Sugar transport</keyword>
<keyword id="KW-1278">Translocase</keyword>
<keyword id="KW-0813">Transport</keyword>
<protein>
    <recommendedName>
        <fullName evidence="1">Arabinose import ATP-binding protein AraG</fullName>
        <ecNumber evidence="1">7.5.2.12</ecNumber>
    </recommendedName>
</protein>
<feature type="chain" id="PRO_0000270486" description="Arabinose import ATP-binding protein AraG">
    <location>
        <begin position="1"/>
        <end position="523"/>
    </location>
</feature>
<feature type="domain" description="ABC transporter 1" evidence="1">
    <location>
        <begin position="20"/>
        <end position="255"/>
    </location>
</feature>
<feature type="domain" description="ABC transporter 2" evidence="1">
    <location>
        <begin position="268"/>
        <end position="511"/>
    </location>
</feature>
<feature type="binding site" evidence="1">
    <location>
        <begin position="52"/>
        <end position="59"/>
    </location>
    <ligand>
        <name>ATP</name>
        <dbReference type="ChEBI" id="CHEBI:30616"/>
    </ligand>
</feature>
<name>ARAG_YERPS</name>
<accession>Q66AF5</accession>
<organism>
    <name type="scientific">Yersinia pseudotuberculosis serotype I (strain IP32953)</name>
    <dbReference type="NCBI Taxonomy" id="273123"/>
    <lineage>
        <taxon>Bacteria</taxon>
        <taxon>Pseudomonadati</taxon>
        <taxon>Pseudomonadota</taxon>
        <taxon>Gammaproteobacteria</taxon>
        <taxon>Enterobacterales</taxon>
        <taxon>Yersiniaceae</taxon>
        <taxon>Yersinia</taxon>
    </lineage>
</organism>
<comment type="function">
    <text evidence="1">Part of the ABC transporter complex AraFGH involved in arabinose import. Responsible for energy coupling to the transport system.</text>
</comment>
<comment type="catalytic activity">
    <reaction evidence="1">
        <text>L-arabinose(out) + ATP + H2O = L-arabinose(in) + ADP + phosphate + H(+)</text>
        <dbReference type="Rhea" id="RHEA:30007"/>
        <dbReference type="ChEBI" id="CHEBI:15377"/>
        <dbReference type="ChEBI" id="CHEBI:15378"/>
        <dbReference type="ChEBI" id="CHEBI:17535"/>
        <dbReference type="ChEBI" id="CHEBI:30616"/>
        <dbReference type="ChEBI" id="CHEBI:43474"/>
        <dbReference type="ChEBI" id="CHEBI:456216"/>
        <dbReference type="EC" id="7.5.2.12"/>
    </reaction>
</comment>
<comment type="subunit">
    <text evidence="1">The complex is composed of two ATP-binding proteins (AraG), two transmembrane proteins (AraH) and a solute-binding protein (AraF).</text>
</comment>
<comment type="subcellular location">
    <subcellularLocation>
        <location evidence="1">Cell inner membrane</location>
        <topology evidence="1">Peripheral membrane protein</topology>
    </subcellularLocation>
</comment>
<comment type="similarity">
    <text evidence="1">Belongs to the ABC transporter superfamily. Arabinose importer (TC 3.A.1.2.2) family.</text>
</comment>
<comment type="sequence caution" evidence="2">
    <conflict type="erroneous initiation">
        <sequence resource="EMBL-CDS" id="CAH21413"/>
    </conflict>
</comment>
<evidence type="ECO:0000255" key="1">
    <source>
        <dbReference type="HAMAP-Rule" id="MF_01721"/>
    </source>
</evidence>
<evidence type="ECO:0000305" key="2"/>